<keyword id="KW-0256">Endoplasmic reticulum</keyword>
<keyword id="KW-0472">Membrane</keyword>
<keyword id="KW-0489">Methyltransferase</keyword>
<keyword id="KW-1185">Reference proteome</keyword>
<keyword id="KW-0949">S-adenosyl-L-methionine</keyword>
<keyword id="KW-0808">Transferase</keyword>
<keyword id="KW-0812">Transmembrane</keyword>
<keyword id="KW-1133">Transmembrane helix</keyword>
<evidence type="ECO:0000250" key="1"/>
<evidence type="ECO:0000250" key="2">
    <source>
        <dbReference type="UniProtKB" id="D6WJ77"/>
    </source>
</evidence>
<evidence type="ECO:0000250" key="3">
    <source>
        <dbReference type="UniProtKB" id="Q8TMG0"/>
    </source>
</evidence>
<evidence type="ECO:0000255" key="4"/>
<evidence type="ECO:0000305" key="5"/>
<sequence length="191" mass="22071">MAARAQAWLFAAALVIFHGSEYVLAAAFHGRRNVTATSLLISKQYVLAMSFAMLEHLTEALLFPELKEYWFVSYVGLVMVIIGEVIRKLAVVTAGRSFTHVIRIHYEDQHKLITHGVYRLMRHPGYSGFLIWAVGTQVMLCNPLSTVAFTLVLWRFFSKRIPYEEFFLRQFFGREYEEYAQKVHSGLPFIE</sequence>
<accession>Q7XSR9</accession>
<accession>A3AX47</accession>
<accession>Q0JAE6</accession>
<comment type="function">
    <text evidence="1">Catalyzes the post-translational methylation of isoprenylated C-terminal cysteine residues. Carboxyl methylation is a reversible and potentially regulated step in the post-translational modification of prenylated proteins (By similarity).</text>
</comment>
<comment type="catalytic activity">
    <reaction>
        <text>[protein]-C-terminal S-[(2E,6E)-farnesyl]-L-cysteine + S-adenosyl-L-methionine = [protein]-C-terminal S-[(2E,6E)-farnesyl]-L-cysteine methyl ester + S-adenosyl-L-homocysteine</text>
        <dbReference type="Rhea" id="RHEA:21672"/>
        <dbReference type="Rhea" id="RHEA-COMP:12125"/>
        <dbReference type="Rhea" id="RHEA-COMP:12126"/>
        <dbReference type="ChEBI" id="CHEBI:57856"/>
        <dbReference type="ChEBI" id="CHEBI:59789"/>
        <dbReference type="ChEBI" id="CHEBI:90510"/>
        <dbReference type="ChEBI" id="CHEBI:90511"/>
        <dbReference type="EC" id="2.1.1.100"/>
    </reaction>
</comment>
<comment type="cofactor">
    <cofactor evidence="1">
        <name>Zn(2+)</name>
        <dbReference type="ChEBI" id="CHEBI:29105"/>
    </cofactor>
    <text evidence="1">Divalent metal cations. Probably Zn(2+).</text>
</comment>
<comment type="subcellular location">
    <subcellularLocation>
        <location evidence="1">Endoplasmic reticulum membrane</location>
        <topology evidence="1">Multi-pass membrane protein</topology>
    </subcellularLocation>
</comment>
<comment type="similarity">
    <text evidence="5">Belongs to the class VI-like SAM-binding methyltransferase superfamily. Isoprenylcysteine carboxyl methyltransferase family.</text>
</comment>
<comment type="sequence caution" evidence="5">
    <conflict type="erroneous gene model prediction">
        <sequence resource="EMBL-CDS" id="BAF15691"/>
    </conflict>
</comment>
<feature type="chain" id="PRO_0000356251" description="Probable protein-S-isoprenylcysteine O-methyltransferase">
    <location>
        <begin position="1"/>
        <end position="191"/>
    </location>
</feature>
<feature type="transmembrane region" description="Helical" evidence="4">
    <location>
        <begin position="8"/>
        <end position="28"/>
    </location>
</feature>
<feature type="transmembrane region" description="Helical" evidence="4">
    <location>
        <begin position="45"/>
        <end position="65"/>
    </location>
</feature>
<feature type="transmembrane region" description="Helical" evidence="4">
    <location>
        <begin position="66"/>
        <end position="86"/>
    </location>
</feature>
<feature type="transmembrane region" description="Helical" evidence="4">
    <location>
        <begin position="129"/>
        <end position="149"/>
    </location>
</feature>
<feature type="binding site" evidence="3">
    <location>
        <begin position="110"/>
        <end position="113"/>
    </location>
    <ligand>
        <name>S-adenosyl-L-methionine</name>
        <dbReference type="ChEBI" id="CHEBI:59789"/>
    </ligand>
</feature>
<feature type="binding site" evidence="3">
    <location>
        <position position="118"/>
    </location>
    <ligand>
        <name>S-adenosyl-L-methionine</name>
        <dbReference type="ChEBI" id="CHEBI:59789"/>
    </ligand>
</feature>
<feature type="binding site" evidence="3">
    <location>
        <begin position="123"/>
        <end position="126"/>
    </location>
    <ligand>
        <name>S-adenosyl-L-methionine</name>
        <dbReference type="ChEBI" id="CHEBI:59789"/>
    </ligand>
</feature>
<feature type="binding site" evidence="2">
    <location>
        <position position="160"/>
    </location>
    <ligand>
        <name>substrate</name>
    </ligand>
</feature>
<feature type="binding site" evidence="3">
    <location>
        <position position="164"/>
    </location>
    <ligand>
        <name>S-adenosyl-L-methionine</name>
        <dbReference type="ChEBI" id="CHEBI:59789"/>
    </ligand>
</feature>
<name>ICMT_ORYSJ</name>
<organism>
    <name type="scientific">Oryza sativa subsp. japonica</name>
    <name type="common">Rice</name>
    <dbReference type="NCBI Taxonomy" id="39947"/>
    <lineage>
        <taxon>Eukaryota</taxon>
        <taxon>Viridiplantae</taxon>
        <taxon>Streptophyta</taxon>
        <taxon>Embryophyta</taxon>
        <taxon>Tracheophyta</taxon>
        <taxon>Spermatophyta</taxon>
        <taxon>Magnoliopsida</taxon>
        <taxon>Liliopsida</taxon>
        <taxon>Poales</taxon>
        <taxon>Poaceae</taxon>
        <taxon>BOP clade</taxon>
        <taxon>Oryzoideae</taxon>
        <taxon>Oryzeae</taxon>
        <taxon>Oryzinae</taxon>
        <taxon>Oryza</taxon>
        <taxon>Oryza sativa</taxon>
    </lineage>
</organism>
<protein>
    <recommendedName>
        <fullName>Probable protein-S-isoprenylcysteine O-methyltransferase</fullName>
        <ecNumber>2.1.1.100</ecNumber>
    </recommendedName>
    <alternativeName>
        <fullName>Isoprenylcysteine carboxylmethyltransferase</fullName>
    </alternativeName>
    <alternativeName>
        <fullName>Prenylated protein carboxyl methyltransferase</fullName>
    </alternativeName>
    <alternativeName>
        <fullName>Prenylcysteine carboxyl methyltransferase</fullName>
    </alternativeName>
</protein>
<gene>
    <name type="primary">ICMT</name>
    <name type="ordered locus">Os04g0602900</name>
    <name type="ordered locus">LOC_Os04g51380</name>
    <name type="ORF">OsJ_015369</name>
    <name type="ORF">OSJNBa0041A02.18</name>
</gene>
<dbReference type="EC" id="2.1.1.100"/>
<dbReference type="EMBL" id="AL606638">
    <property type="protein sequence ID" value="CAE01825.2"/>
    <property type="molecule type" value="Genomic_DNA"/>
</dbReference>
<dbReference type="EMBL" id="AP008210">
    <property type="protein sequence ID" value="BAF15691.1"/>
    <property type="status" value="ALT_SEQ"/>
    <property type="molecule type" value="Genomic_DNA"/>
</dbReference>
<dbReference type="EMBL" id="AP014960">
    <property type="status" value="NOT_ANNOTATED_CDS"/>
    <property type="molecule type" value="Genomic_DNA"/>
</dbReference>
<dbReference type="EMBL" id="CM000141">
    <property type="status" value="NOT_ANNOTATED_CDS"/>
    <property type="molecule type" value="Genomic_DNA"/>
</dbReference>
<dbReference type="SMR" id="Q7XSR9"/>
<dbReference type="FunCoup" id="Q7XSR9">
    <property type="interactions" value="1635"/>
</dbReference>
<dbReference type="STRING" id="39947.Q7XSR9"/>
<dbReference type="PaxDb" id="39947-Q7XSR9"/>
<dbReference type="KEGG" id="dosa:Os04g0602900"/>
<dbReference type="HOGENOM" id="CLU_2744539_0_0_1"/>
<dbReference type="InParanoid" id="Q7XSR9"/>
<dbReference type="Proteomes" id="UP000000763">
    <property type="component" value="Chromosome 4"/>
</dbReference>
<dbReference type="Proteomes" id="UP000007752">
    <property type="component" value="Chromosome 4"/>
</dbReference>
<dbReference type="Proteomes" id="UP000059680">
    <property type="component" value="Chromosome 4"/>
</dbReference>
<dbReference type="GO" id="GO:0005783">
    <property type="term" value="C:endoplasmic reticulum"/>
    <property type="evidence" value="ECO:0000318"/>
    <property type="project" value="GO_Central"/>
</dbReference>
<dbReference type="GO" id="GO:0005789">
    <property type="term" value="C:endoplasmic reticulum membrane"/>
    <property type="evidence" value="ECO:0007669"/>
    <property type="project" value="UniProtKB-SubCell"/>
</dbReference>
<dbReference type="GO" id="GO:0004671">
    <property type="term" value="F:protein C-terminal S-isoprenylcysteine carboxyl O-methyltransferase activity"/>
    <property type="evidence" value="ECO:0000318"/>
    <property type="project" value="GO_Central"/>
</dbReference>
<dbReference type="GO" id="GO:0032259">
    <property type="term" value="P:methylation"/>
    <property type="evidence" value="ECO:0007669"/>
    <property type="project" value="UniProtKB-KW"/>
</dbReference>
<dbReference type="Gene3D" id="1.20.120.1630">
    <property type="match status" value="1"/>
</dbReference>
<dbReference type="InterPro" id="IPR007269">
    <property type="entry name" value="ICMT_MeTrfase"/>
</dbReference>
<dbReference type="InterPro" id="IPR025770">
    <property type="entry name" value="PPMT_MeTrfase"/>
</dbReference>
<dbReference type="PANTHER" id="PTHR12714">
    <property type="entry name" value="PROTEIN-S ISOPRENYLCYSTEINE O-METHYLTRANSFERASE"/>
    <property type="match status" value="1"/>
</dbReference>
<dbReference type="PANTHER" id="PTHR12714:SF9">
    <property type="entry name" value="PROTEIN-S-ISOPRENYLCYSTEINE O-METHYLTRANSFERASE"/>
    <property type="match status" value="1"/>
</dbReference>
<dbReference type="Pfam" id="PF04140">
    <property type="entry name" value="ICMT"/>
    <property type="match status" value="1"/>
</dbReference>
<dbReference type="PROSITE" id="PS51564">
    <property type="entry name" value="SAM_ICMT"/>
    <property type="match status" value="1"/>
</dbReference>
<reference key="1">
    <citation type="journal article" date="2002" name="Nature">
        <title>Sequence and analysis of rice chromosome 4.</title>
        <authorList>
            <person name="Feng Q."/>
            <person name="Zhang Y."/>
            <person name="Hao P."/>
            <person name="Wang S."/>
            <person name="Fu G."/>
            <person name="Huang Y."/>
            <person name="Li Y."/>
            <person name="Zhu J."/>
            <person name="Liu Y."/>
            <person name="Hu X."/>
            <person name="Jia P."/>
            <person name="Zhang Y."/>
            <person name="Zhao Q."/>
            <person name="Ying K."/>
            <person name="Yu S."/>
            <person name="Tang Y."/>
            <person name="Weng Q."/>
            <person name="Zhang L."/>
            <person name="Lu Y."/>
            <person name="Mu J."/>
            <person name="Lu Y."/>
            <person name="Zhang L.S."/>
            <person name="Yu Z."/>
            <person name="Fan D."/>
            <person name="Liu X."/>
            <person name="Lu T."/>
            <person name="Li C."/>
            <person name="Wu Y."/>
            <person name="Sun T."/>
            <person name="Lei H."/>
            <person name="Li T."/>
            <person name="Hu H."/>
            <person name="Guan J."/>
            <person name="Wu M."/>
            <person name="Zhang R."/>
            <person name="Zhou B."/>
            <person name="Chen Z."/>
            <person name="Chen L."/>
            <person name="Jin Z."/>
            <person name="Wang R."/>
            <person name="Yin H."/>
            <person name="Cai Z."/>
            <person name="Ren S."/>
            <person name="Lv G."/>
            <person name="Gu W."/>
            <person name="Zhu G."/>
            <person name="Tu Y."/>
            <person name="Jia J."/>
            <person name="Zhang Y."/>
            <person name="Chen J."/>
            <person name="Kang H."/>
            <person name="Chen X."/>
            <person name="Shao C."/>
            <person name="Sun Y."/>
            <person name="Hu Q."/>
            <person name="Zhang X."/>
            <person name="Zhang W."/>
            <person name="Wang L."/>
            <person name="Ding C."/>
            <person name="Sheng H."/>
            <person name="Gu J."/>
            <person name="Chen S."/>
            <person name="Ni L."/>
            <person name="Zhu F."/>
            <person name="Chen W."/>
            <person name="Lan L."/>
            <person name="Lai Y."/>
            <person name="Cheng Z."/>
            <person name="Gu M."/>
            <person name="Jiang J."/>
            <person name="Li J."/>
            <person name="Hong G."/>
            <person name="Xue Y."/>
            <person name="Han B."/>
        </authorList>
    </citation>
    <scope>NUCLEOTIDE SEQUENCE [LARGE SCALE GENOMIC DNA]</scope>
    <source>
        <strain>cv. Nipponbare</strain>
    </source>
</reference>
<reference key="2">
    <citation type="journal article" date="2005" name="Nature">
        <title>The map-based sequence of the rice genome.</title>
        <authorList>
            <consortium name="International rice genome sequencing project (IRGSP)"/>
        </authorList>
    </citation>
    <scope>NUCLEOTIDE SEQUENCE [LARGE SCALE GENOMIC DNA]</scope>
    <source>
        <strain>cv. Nipponbare</strain>
    </source>
</reference>
<reference key="3">
    <citation type="journal article" date="2008" name="Nucleic Acids Res.">
        <title>The rice annotation project database (RAP-DB): 2008 update.</title>
        <authorList>
            <consortium name="The rice annotation project (RAP)"/>
        </authorList>
    </citation>
    <scope>GENOME REANNOTATION</scope>
    <source>
        <strain>cv. Nipponbare</strain>
    </source>
</reference>
<reference key="4">
    <citation type="journal article" date="2013" name="Rice">
        <title>Improvement of the Oryza sativa Nipponbare reference genome using next generation sequence and optical map data.</title>
        <authorList>
            <person name="Kawahara Y."/>
            <person name="de la Bastide M."/>
            <person name="Hamilton J.P."/>
            <person name="Kanamori H."/>
            <person name="McCombie W.R."/>
            <person name="Ouyang S."/>
            <person name="Schwartz D.C."/>
            <person name="Tanaka T."/>
            <person name="Wu J."/>
            <person name="Zhou S."/>
            <person name="Childs K.L."/>
            <person name="Davidson R.M."/>
            <person name="Lin H."/>
            <person name="Quesada-Ocampo L."/>
            <person name="Vaillancourt B."/>
            <person name="Sakai H."/>
            <person name="Lee S.S."/>
            <person name="Kim J."/>
            <person name="Numa H."/>
            <person name="Itoh T."/>
            <person name="Buell C.R."/>
            <person name="Matsumoto T."/>
        </authorList>
    </citation>
    <scope>GENOME REANNOTATION</scope>
    <source>
        <strain>cv. Nipponbare</strain>
    </source>
</reference>
<reference key="5">
    <citation type="journal article" date="2005" name="PLoS Biol.">
        <title>The genomes of Oryza sativa: a history of duplications.</title>
        <authorList>
            <person name="Yu J."/>
            <person name="Wang J."/>
            <person name="Lin W."/>
            <person name="Li S."/>
            <person name="Li H."/>
            <person name="Zhou J."/>
            <person name="Ni P."/>
            <person name="Dong W."/>
            <person name="Hu S."/>
            <person name="Zeng C."/>
            <person name="Zhang J."/>
            <person name="Zhang Y."/>
            <person name="Li R."/>
            <person name="Xu Z."/>
            <person name="Li S."/>
            <person name="Li X."/>
            <person name="Zheng H."/>
            <person name="Cong L."/>
            <person name="Lin L."/>
            <person name="Yin J."/>
            <person name="Geng J."/>
            <person name="Li G."/>
            <person name="Shi J."/>
            <person name="Liu J."/>
            <person name="Lv H."/>
            <person name="Li J."/>
            <person name="Wang J."/>
            <person name="Deng Y."/>
            <person name="Ran L."/>
            <person name="Shi X."/>
            <person name="Wang X."/>
            <person name="Wu Q."/>
            <person name="Li C."/>
            <person name="Ren X."/>
            <person name="Wang J."/>
            <person name="Wang X."/>
            <person name="Li D."/>
            <person name="Liu D."/>
            <person name="Zhang X."/>
            <person name="Ji Z."/>
            <person name="Zhao W."/>
            <person name="Sun Y."/>
            <person name="Zhang Z."/>
            <person name="Bao J."/>
            <person name="Han Y."/>
            <person name="Dong L."/>
            <person name="Ji J."/>
            <person name="Chen P."/>
            <person name="Wu S."/>
            <person name="Liu J."/>
            <person name="Xiao Y."/>
            <person name="Bu D."/>
            <person name="Tan J."/>
            <person name="Yang L."/>
            <person name="Ye C."/>
            <person name="Zhang J."/>
            <person name="Xu J."/>
            <person name="Zhou Y."/>
            <person name="Yu Y."/>
            <person name="Zhang B."/>
            <person name="Zhuang S."/>
            <person name="Wei H."/>
            <person name="Liu B."/>
            <person name="Lei M."/>
            <person name="Yu H."/>
            <person name="Li Y."/>
            <person name="Xu H."/>
            <person name="Wei S."/>
            <person name="He X."/>
            <person name="Fang L."/>
            <person name="Zhang Z."/>
            <person name="Zhang Y."/>
            <person name="Huang X."/>
            <person name="Su Z."/>
            <person name="Tong W."/>
            <person name="Li J."/>
            <person name="Tong Z."/>
            <person name="Li S."/>
            <person name="Ye J."/>
            <person name="Wang L."/>
            <person name="Fang L."/>
            <person name="Lei T."/>
            <person name="Chen C.-S."/>
            <person name="Chen H.-C."/>
            <person name="Xu Z."/>
            <person name="Li H."/>
            <person name="Huang H."/>
            <person name="Zhang F."/>
            <person name="Xu H."/>
            <person name="Li N."/>
            <person name="Zhao C."/>
            <person name="Li S."/>
            <person name="Dong L."/>
            <person name="Huang Y."/>
            <person name="Li L."/>
            <person name="Xi Y."/>
            <person name="Qi Q."/>
            <person name="Li W."/>
            <person name="Zhang B."/>
            <person name="Hu W."/>
            <person name="Zhang Y."/>
            <person name="Tian X."/>
            <person name="Jiao Y."/>
            <person name="Liang X."/>
            <person name="Jin J."/>
            <person name="Gao L."/>
            <person name="Zheng W."/>
            <person name="Hao B."/>
            <person name="Liu S.-M."/>
            <person name="Wang W."/>
            <person name="Yuan L."/>
            <person name="Cao M."/>
            <person name="McDermott J."/>
            <person name="Samudrala R."/>
            <person name="Wang J."/>
            <person name="Wong G.K.-S."/>
            <person name="Yang H."/>
        </authorList>
    </citation>
    <scope>NUCLEOTIDE SEQUENCE [LARGE SCALE GENOMIC DNA]</scope>
    <source>
        <strain>cv. Nipponbare</strain>
    </source>
</reference>
<proteinExistence type="inferred from homology"/>